<comment type="function">
    <text evidence="1">Chaperone protein involved in the assembly of the mitochondrial NADH:ubiquinone oxidoreductase complex (complex I). Participates in constructing the membrane arm of complex I (By similarity).</text>
</comment>
<comment type="subunit">
    <text evidence="1 2">Associates with the intermediate 315 kDa subcomplex of incompletely assembled complex I. Interacts with TMEM70 (By similarity).</text>
</comment>
<comment type="subcellular location">
    <subcellularLocation>
        <location evidence="1">Mitochondrion membrane</location>
        <topology evidence="1">Multi-pass membrane protein</topology>
    </subcellularLocation>
</comment>
<comment type="similarity">
    <text evidence="4">Belongs to the Tim17/Tim22/Tim23 family.</text>
</comment>
<proteinExistence type="evidence at transcript level"/>
<gene>
    <name evidence="5" type="primary">Timmdc1</name>
</gene>
<sequence length="285" mass="32050">MEAPPPAPRSRLCGAWGPFPRVFAAGAVAADSQSFVEDPELRSYVSDPGSSESGWDRLRQLFVKDEQRKISKEMDYICRAALSAGIIGWAYGGIPAFIYAKRRYIEQSQAEIYHNRFDAVQSAHRAATRGFIRYGWRWSWRTAVFVTIFNTVNTGLTVYRNKDALSHFAIAGAVTGGLFRINLGLRGLVAGGIIGALLGTPMGSLLMALEKHCGETVQERRQKDREAQQEQRLEEWRRNLQVTELLPMEIESGLEKIQPEKDAQRIEELLRLPRNPASPDKQSED</sequence>
<reference key="1">
    <citation type="journal article" date="2004" name="Genome Res.">
        <title>The status, quality, and expansion of the NIH full-length cDNA project: the Mammalian Gene Collection (MGC).</title>
        <authorList>
            <consortium name="The MGC Project Team"/>
        </authorList>
    </citation>
    <scope>NUCLEOTIDE SEQUENCE [LARGE SCALE MRNA]</scope>
    <source>
        <tissue>Kidney</tissue>
    </source>
</reference>
<evidence type="ECO:0000250" key="1"/>
<evidence type="ECO:0000250" key="2">
    <source>
        <dbReference type="UniProtKB" id="Q9NPL8"/>
    </source>
</evidence>
<evidence type="ECO:0000255" key="3"/>
<evidence type="ECO:0000305" key="4"/>
<evidence type="ECO:0000312" key="5">
    <source>
        <dbReference type="RGD" id="1359380"/>
    </source>
</evidence>
<protein>
    <recommendedName>
        <fullName evidence="4">Complex I assembly factor TIMMDC1, mitochondrial</fullName>
    </recommendedName>
    <alternativeName>
        <fullName>Translocase of inner mitochondrial membrane domain-containing protein 1</fullName>
        <shortName>TIMM domain containing-protein 1</shortName>
    </alternativeName>
</protein>
<organism>
    <name type="scientific">Rattus norvegicus</name>
    <name type="common">Rat</name>
    <dbReference type="NCBI Taxonomy" id="10116"/>
    <lineage>
        <taxon>Eukaryota</taxon>
        <taxon>Metazoa</taxon>
        <taxon>Chordata</taxon>
        <taxon>Craniata</taxon>
        <taxon>Vertebrata</taxon>
        <taxon>Euteleostomi</taxon>
        <taxon>Mammalia</taxon>
        <taxon>Eutheria</taxon>
        <taxon>Euarchontoglires</taxon>
        <taxon>Glires</taxon>
        <taxon>Rodentia</taxon>
        <taxon>Myomorpha</taxon>
        <taxon>Muroidea</taxon>
        <taxon>Muridae</taxon>
        <taxon>Murinae</taxon>
        <taxon>Rattus</taxon>
    </lineage>
</organism>
<accession>Q6AY94</accession>
<feature type="chain" id="PRO_0000252480" description="Complex I assembly factor TIMMDC1, mitochondrial">
    <location>
        <begin position="1"/>
        <end position="285"/>
    </location>
</feature>
<feature type="transmembrane region" description="Helical" evidence="3">
    <location>
        <begin position="80"/>
        <end position="100"/>
    </location>
</feature>
<feature type="transmembrane region" description="Helical" evidence="3">
    <location>
        <begin position="137"/>
        <end position="159"/>
    </location>
</feature>
<feature type="transmembrane region" description="Helical" evidence="3">
    <location>
        <begin position="165"/>
        <end position="185"/>
    </location>
</feature>
<feature type="transmembrane region" description="Helical" evidence="3">
    <location>
        <begin position="188"/>
        <end position="208"/>
    </location>
</feature>
<dbReference type="EMBL" id="BC079140">
    <property type="protein sequence ID" value="AAH79140.1"/>
    <property type="molecule type" value="mRNA"/>
</dbReference>
<dbReference type="RefSeq" id="NP_001007677.1">
    <property type="nucleotide sequence ID" value="NM_001007676.1"/>
</dbReference>
<dbReference type="FunCoup" id="Q6AY94">
    <property type="interactions" value="1853"/>
</dbReference>
<dbReference type="STRING" id="10116.ENSRNOP00000004023"/>
<dbReference type="PhosphoSitePlus" id="Q6AY94"/>
<dbReference type="PaxDb" id="10116-ENSRNOP00000004023"/>
<dbReference type="GeneID" id="303922"/>
<dbReference type="KEGG" id="rno:303922"/>
<dbReference type="UCSC" id="RGD:1359380">
    <property type="organism name" value="rat"/>
</dbReference>
<dbReference type="AGR" id="RGD:1359380"/>
<dbReference type="CTD" id="51300"/>
<dbReference type="RGD" id="1359380">
    <property type="gene designation" value="Timmdc1"/>
</dbReference>
<dbReference type="VEuPathDB" id="HostDB:ENSRNOG00000002999"/>
<dbReference type="eggNOG" id="KOG4608">
    <property type="taxonomic scope" value="Eukaryota"/>
</dbReference>
<dbReference type="HOGENOM" id="CLU_068982_0_0_1"/>
<dbReference type="InParanoid" id="Q6AY94"/>
<dbReference type="OrthoDB" id="5826189at2759"/>
<dbReference type="PhylomeDB" id="Q6AY94"/>
<dbReference type="TreeFam" id="TF324676"/>
<dbReference type="Reactome" id="R-RNO-6799198">
    <property type="pathway name" value="Complex I biogenesis"/>
</dbReference>
<dbReference type="PRO" id="PR:Q6AY94"/>
<dbReference type="Proteomes" id="UP000002494">
    <property type="component" value="Chromosome 11"/>
</dbReference>
<dbReference type="Bgee" id="ENSRNOG00000002999">
    <property type="expression patterns" value="Expressed in skeletal muscle tissue and 20 other cell types or tissues"/>
</dbReference>
<dbReference type="GO" id="GO:0031966">
    <property type="term" value="C:mitochondrial membrane"/>
    <property type="evidence" value="ECO:0007669"/>
    <property type="project" value="UniProtKB-SubCell"/>
</dbReference>
<dbReference type="GO" id="GO:0005739">
    <property type="term" value="C:mitochondrion"/>
    <property type="evidence" value="ECO:0000318"/>
    <property type="project" value="GO_Central"/>
</dbReference>
<dbReference type="GO" id="GO:0032981">
    <property type="term" value="P:mitochondrial respiratory chain complex I assembly"/>
    <property type="evidence" value="ECO:0007669"/>
    <property type="project" value="InterPro"/>
</dbReference>
<dbReference type="InterPro" id="IPR055299">
    <property type="entry name" value="TIMMDC1"/>
</dbReference>
<dbReference type="PANTHER" id="PTHR13002">
    <property type="entry name" value="C3ORF1 PROTEIN-RELATED"/>
    <property type="match status" value="1"/>
</dbReference>
<dbReference type="PANTHER" id="PTHR13002:SF1">
    <property type="entry name" value="COMPLEX I ASSEMBLY FACTOR TIMMDC1, MITOCHONDRIAL"/>
    <property type="match status" value="1"/>
</dbReference>
<dbReference type="Pfam" id="PF02466">
    <property type="entry name" value="Tim17"/>
    <property type="match status" value="1"/>
</dbReference>
<keyword id="KW-0143">Chaperone</keyword>
<keyword id="KW-0472">Membrane</keyword>
<keyword id="KW-0496">Mitochondrion</keyword>
<keyword id="KW-1185">Reference proteome</keyword>
<keyword id="KW-0812">Transmembrane</keyword>
<keyword id="KW-1133">Transmembrane helix</keyword>
<name>TIDC1_RAT</name>